<feature type="chain" id="PRO_0000100789" description="Phospholipid scramblase 3">
    <location>
        <begin position="1"/>
        <end position="295"/>
    </location>
</feature>
<feature type="topological domain" description="Mitochondrial intermembrane" evidence="2">
    <location>
        <begin position="1"/>
        <end position="265"/>
    </location>
</feature>
<feature type="transmembrane region" description="Helical" evidence="4">
    <location>
        <begin position="266"/>
        <end position="282"/>
    </location>
</feature>
<feature type="region of interest" description="Proline-rich domain (PRD)" evidence="1">
    <location>
        <begin position="1"/>
        <end position="57"/>
    </location>
</feature>
<feature type="region of interest" description="Disordered" evidence="5">
    <location>
        <begin position="1"/>
        <end position="40"/>
    </location>
</feature>
<feature type="short sequence motif" description="SH3-binding 1" evidence="4">
    <location>
        <begin position="7"/>
        <end position="15"/>
    </location>
</feature>
<feature type="short sequence motif" description="PPxY motif" evidence="4">
    <location>
        <begin position="15"/>
        <end position="18"/>
    </location>
</feature>
<feature type="short sequence motif" description="SH3-binding 2" evidence="4">
    <location>
        <begin position="21"/>
        <end position="27"/>
    </location>
</feature>
<feature type="short sequence motif" description="SH3-binding 3" evidence="4">
    <location>
        <begin position="65"/>
        <end position="70"/>
    </location>
</feature>
<feature type="compositionally biased region" description="Low complexity" evidence="5">
    <location>
        <begin position="1"/>
        <end position="11"/>
    </location>
</feature>
<feature type="compositionally biased region" description="Pro residues" evidence="5">
    <location>
        <begin position="12"/>
        <end position="40"/>
    </location>
</feature>
<feature type="modified residue" description="Phosphothreonine; by PKC/PRKCD" evidence="12">
    <location>
        <position position="21"/>
    </location>
</feature>
<feature type="lipid moiety-binding region" description="S-palmitoyl cysteine" evidence="3">
    <location>
        <position position="158"/>
    </location>
</feature>
<feature type="lipid moiety-binding region" description="S-palmitoyl cysteine" evidence="3">
    <location>
        <position position="160"/>
    </location>
</feature>
<feature type="lipid moiety-binding region" description="S-palmitoyl cysteine" evidence="3">
    <location>
        <position position="162"/>
    </location>
</feature>
<feature type="lipid moiety-binding region" description="S-palmitoyl cysteine" evidence="3">
    <location>
        <position position="163"/>
    </location>
</feature>
<feature type="lipid moiety-binding region" description="S-palmitoyl cysteine" evidence="3">
    <location>
        <position position="165"/>
    </location>
</feature>
<feature type="sequence variant" id="VAR_015568" description="In dbSNP:rs3744549." evidence="6 9 10 18">
    <original>V</original>
    <variation>I</variation>
    <location>
        <position position="293"/>
    </location>
</feature>
<feature type="mutagenesis site" description="Fails to enhance apoptosis mediated by PRKCD activators." evidence="12">
    <original>T</original>
    <variation>A</variation>
    <location>
        <position position="21"/>
    </location>
</feature>
<feature type="mutagenesis site" description="Promotes apoptosis, more potent in lipid flippase activity." evidence="12">
    <original>T</original>
    <variation>D</variation>
    <location>
        <position position="21"/>
    </location>
</feature>
<feature type="mutagenesis site" description="Reduces interaction with PDCD6. Abolishes interaction with PDCD6; when associated with A-52." evidence="13">
    <original>F</original>
    <variation>A</variation>
    <location>
        <position position="49"/>
    </location>
</feature>
<feature type="mutagenesis site" description="No effect on the interaction with PDCD6." evidence="13">
    <original>F</original>
    <variation>W</variation>
    <location>
        <position position="49"/>
    </location>
</feature>
<feature type="mutagenesis site" description="Reduces interaction with PDCD6." evidence="13">
    <original>F</original>
    <variation>Y</variation>
    <variation>L</variation>
    <location>
        <position position="49"/>
    </location>
</feature>
<feature type="mutagenesis site" description="Abolishes interaction with PDCD6; when associated with A-49." evidence="13">
    <original>F</original>
    <variation>A</variation>
    <location>
        <position position="52"/>
    </location>
</feature>
<feature type="mutagenesis site" description="Reduced phospholipid scramblase activity. Reduced calcium and magnesium-binding. Diminished apoptotic responsiveness. Defective mitochondrial structure and oxidative function. Reduced binding affinity for Pb(2+) and Hg(2+) ions. Increased cardiolipin biosynthesis from glycerol and decreased cardiolipin resynthesis from linoleic acid." evidence="7 8 11 14 15 16 17">
    <original>F</original>
    <variation>V</variation>
    <location>
        <position position="258"/>
    </location>
</feature>
<feature type="sequence conflict" description="In Ref. 5; AAH11735." evidence="19" ref="5">
    <original>V</original>
    <variation>L</variation>
    <location>
        <position position="149"/>
    </location>
</feature>
<dbReference type="EMBL" id="AF159442">
    <property type="protein sequence ID" value="AAF91083.1"/>
    <property type="molecule type" value="mRNA"/>
</dbReference>
<dbReference type="EMBL" id="AK075188">
    <property type="protein sequence ID" value="BAC11458.1"/>
    <property type="molecule type" value="mRNA"/>
</dbReference>
<dbReference type="EMBL" id="AK290117">
    <property type="protein sequence ID" value="BAF82806.1"/>
    <property type="molecule type" value="mRNA"/>
</dbReference>
<dbReference type="EMBL" id="CH471108">
    <property type="protein sequence ID" value="EAW90200.1"/>
    <property type="molecule type" value="Genomic_DNA"/>
</dbReference>
<dbReference type="EMBL" id="AC113189">
    <property type="status" value="NOT_ANNOTATED_CDS"/>
    <property type="molecule type" value="Genomic_DNA"/>
</dbReference>
<dbReference type="EMBL" id="BC011735">
    <property type="protein sequence ID" value="AAH11735.1"/>
    <property type="molecule type" value="mRNA"/>
</dbReference>
<dbReference type="EMBL" id="BC093026">
    <property type="protein sequence ID" value="AAH93026.1"/>
    <property type="molecule type" value="mRNA"/>
</dbReference>
<dbReference type="CCDS" id="CCDS42253.1"/>
<dbReference type="RefSeq" id="NP_001188505.1">
    <property type="nucleotide sequence ID" value="NM_001201576.2"/>
</dbReference>
<dbReference type="RefSeq" id="NP_001356336.1">
    <property type="nucleotide sequence ID" value="NM_001369407.1"/>
</dbReference>
<dbReference type="RefSeq" id="NP_065093.2">
    <property type="nucleotide sequence ID" value="NM_020360.3"/>
</dbReference>
<dbReference type="BioGRID" id="121341">
    <property type="interactions" value="51"/>
</dbReference>
<dbReference type="FunCoup" id="Q9NRY6">
    <property type="interactions" value="801"/>
</dbReference>
<dbReference type="IntAct" id="Q9NRY6">
    <property type="interactions" value="48"/>
</dbReference>
<dbReference type="MINT" id="Q9NRY6"/>
<dbReference type="STRING" id="9606.ENSP00000459019"/>
<dbReference type="SwissLipids" id="SLP:000001107"/>
<dbReference type="TCDB" id="9.A.36.1.6">
    <property type="family name" value="the ca(2+)-dependent phospholipid scramblase (scramblase) family"/>
</dbReference>
<dbReference type="GlyGen" id="Q9NRY6">
    <property type="glycosylation" value="1 site"/>
</dbReference>
<dbReference type="iPTMnet" id="Q9NRY6"/>
<dbReference type="PhosphoSitePlus" id="Q9NRY6"/>
<dbReference type="SwissPalm" id="Q9NRY6"/>
<dbReference type="BioMuta" id="PLSCR3"/>
<dbReference type="DMDM" id="296452876"/>
<dbReference type="jPOST" id="Q9NRY6"/>
<dbReference type="MassIVE" id="Q9NRY6"/>
<dbReference type="PaxDb" id="9606-ENSP00000438547"/>
<dbReference type="PeptideAtlas" id="Q9NRY6"/>
<dbReference type="ProteomicsDB" id="82444"/>
<dbReference type="Pumba" id="Q9NRY6"/>
<dbReference type="Antibodypedia" id="24083">
    <property type="antibodies" value="174 antibodies from 26 providers"/>
</dbReference>
<dbReference type="DNASU" id="57048"/>
<dbReference type="Ensembl" id="ENST00000324822.15">
    <property type="protein sequence ID" value="ENSP00000316021.11"/>
    <property type="gene ID" value="ENSG00000187838.17"/>
</dbReference>
<dbReference type="Ensembl" id="ENST00000574401.5">
    <property type="protein sequence ID" value="ENSP00000459019.1"/>
    <property type="gene ID" value="ENSG00000187838.17"/>
</dbReference>
<dbReference type="Ensembl" id="ENST00000576201.5">
    <property type="protein sequence ID" value="ENSP00000459419.1"/>
    <property type="gene ID" value="ENSG00000187838.17"/>
</dbReference>
<dbReference type="Ensembl" id="ENST00000619711.5">
    <property type="protein sequence ID" value="ENSP00000483743.2"/>
    <property type="gene ID" value="ENSG00000187838.17"/>
</dbReference>
<dbReference type="Ensembl" id="ENST00000639780.1">
    <property type="protein sequence ID" value="ENSP00000492083.1"/>
    <property type="gene ID" value="ENSG00000284009.2"/>
</dbReference>
<dbReference type="Ensembl" id="ENST00000639874.2">
    <property type="protein sequence ID" value="ENSP00000492026.2"/>
    <property type="gene ID" value="ENSG00000284009.2"/>
</dbReference>
<dbReference type="Ensembl" id="ENST00000640053.1">
    <property type="protein sequence ID" value="ENSP00000491350.1"/>
    <property type="gene ID" value="ENSG00000284009.2"/>
</dbReference>
<dbReference type="Ensembl" id="ENST00000640375.1">
    <property type="protein sequence ID" value="ENSP00000491393.1"/>
    <property type="gene ID" value="ENSG00000284009.2"/>
</dbReference>
<dbReference type="GeneID" id="57048"/>
<dbReference type="KEGG" id="hsa:57048"/>
<dbReference type="MANE-Select" id="ENST00000619711.5">
    <property type="protein sequence ID" value="ENSP00000483743.2"/>
    <property type="RefSeq nucleotide sequence ID" value="NM_020360.4"/>
    <property type="RefSeq protein sequence ID" value="NP_065093.2"/>
</dbReference>
<dbReference type="UCSC" id="uc002ggm.3">
    <property type="organism name" value="human"/>
</dbReference>
<dbReference type="AGR" id="HGNC:16495"/>
<dbReference type="CTD" id="57048"/>
<dbReference type="DisGeNET" id="57048"/>
<dbReference type="GeneCards" id="PLSCR3"/>
<dbReference type="HGNC" id="HGNC:16495">
    <property type="gene designation" value="PLSCR3"/>
</dbReference>
<dbReference type="HPA" id="ENSG00000187838">
    <property type="expression patterns" value="Low tissue specificity"/>
</dbReference>
<dbReference type="MIM" id="607611">
    <property type="type" value="gene"/>
</dbReference>
<dbReference type="neXtProt" id="NX_Q9NRY6"/>
<dbReference type="OpenTargets" id="ENSG00000187838"/>
<dbReference type="PharmGKB" id="PA33421"/>
<dbReference type="VEuPathDB" id="HostDB:ENSG00000187838"/>
<dbReference type="eggNOG" id="KOG0621">
    <property type="taxonomic scope" value="Eukaryota"/>
</dbReference>
<dbReference type="GeneTree" id="ENSGT00940000161755"/>
<dbReference type="HOGENOM" id="CLU_053024_1_0_1"/>
<dbReference type="InParanoid" id="Q9NRY6"/>
<dbReference type="OMA" id="MNEQAQH"/>
<dbReference type="OrthoDB" id="444338at2759"/>
<dbReference type="PAN-GO" id="Q9NRY6">
    <property type="GO annotations" value="3 GO annotations based on evolutionary models"/>
</dbReference>
<dbReference type="PhylomeDB" id="Q9NRY6"/>
<dbReference type="TreeFam" id="TF314939"/>
<dbReference type="BRENDA" id="7.6.2.1">
    <property type="organism ID" value="2681"/>
</dbReference>
<dbReference type="PathwayCommons" id="Q9NRY6"/>
<dbReference type="SignaLink" id="Q9NRY6"/>
<dbReference type="SIGNOR" id="Q9NRY6"/>
<dbReference type="BioGRID-ORCS" id="57048">
    <property type="hits" value="12 hits in 1055 CRISPR screens"/>
</dbReference>
<dbReference type="GeneWiki" id="PLSCR3"/>
<dbReference type="GenomeRNAi" id="57048"/>
<dbReference type="Pharos" id="Q9NRY6">
    <property type="development level" value="Tbio"/>
</dbReference>
<dbReference type="PRO" id="PR:Q9NRY6"/>
<dbReference type="Proteomes" id="UP000005640">
    <property type="component" value="Chromosome 17"/>
</dbReference>
<dbReference type="RNAct" id="Q9NRY6">
    <property type="molecule type" value="protein"/>
</dbReference>
<dbReference type="Bgee" id="ENSG00000187838">
    <property type="expression patterns" value="Expressed in granulocyte and 96 other cell types or tissues"/>
</dbReference>
<dbReference type="ExpressionAtlas" id="Q9NRY6">
    <property type="expression patterns" value="baseline and differential"/>
</dbReference>
<dbReference type="GO" id="GO:0005829">
    <property type="term" value="C:cytosol"/>
    <property type="evidence" value="ECO:0000314"/>
    <property type="project" value="UniProtKB"/>
</dbReference>
<dbReference type="GO" id="GO:0005743">
    <property type="term" value="C:mitochondrial inner membrane"/>
    <property type="evidence" value="ECO:0000250"/>
    <property type="project" value="UniProtKB"/>
</dbReference>
<dbReference type="GO" id="GO:0005739">
    <property type="term" value="C:mitochondrion"/>
    <property type="evidence" value="ECO:0000314"/>
    <property type="project" value="UniProtKB"/>
</dbReference>
<dbReference type="GO" id="GO:0005634">
    <property type="term" value="C:nucleus"/>
    <property type="evidence" value="ECO:0000250"/>
    <property type="project" value="UniProtKB"/>
</dbReference>
<dbReference type="GO" id="GO:0005886">
    <property type="term" value="C:plasma membrane"/>
    <property type="evidence" value="ECO:0000314"/>
    <property type="project" value="UniProtKB"/>
</dbReference>
<dbReference type="GO" id="GO:0005509">
    <property type="term" value="F:calcium ion binding"/>
    <property type="evidence" value="ECO:0000315"/>
    <property type="project" value="UniProtKB"/>
</dbReference>
<dbReference type="GO" id="GO:0048306">
    <property type="term" value="F:calcium-dependent protein binding"/>
    <property type="evidence" value="ECO:0000353"/>
    <property type="project" value="UniProtKB"/>
</dbReference>
<dbReference type="GO" id="GO:0032791">
    <property type="term" value="F:lead ion binding"/>
    <property type="evidence" value="ECO:0000315"/>
    <property type="project" value="UniProtKB"/>
</dbReference>
<dbReference type="GO" id="GO:0000287">
    <property type="term" value="F:magnesium ion binding"/>
    <property type="evidence" value="ECO:0000315"/>
    <property type="project" value="UniProtKB"/>
</dbReference>
<dbReference type="GO" id="GO:0045340">
    <property type="term" value="F:mercury ion binding"/>
    <property type="evidence" value="ECO:0000315"/>
    <property type="project" value="UniProtKB"/>
</dbReference>
<dbReference type="GO" id="GO:0017128">
    <property type="term" value="F:phospholipid scramblase activity"/>
    <property type="evidence" value="ECO:0000315"/>
    <property type="project" value="UniProtKB"/>
</dbReference>
<dbReference type="GO" id="GO:0017124">
    <property type="term" value="F:SH3 domain binding"/>
    <property type="evidence" value="ECO:0007669"/>
    <property type="project" value="UniProtKB-KW"/>
</dbReference>
<dbReference type="GO" id="GO:0006915">
    <property type="term" value="P:apoptotic process"/>
    <property type="evidence" value="ECO:0000315"/>
    <property type="project" value="UniProtKB"/>
</dbReference>
<dbReference type="GO" id="GO:0071222">
    <property type="term" value="P:cellular response to lipopolysaccharide"/>
    <property type="evidence" value="ECO:0007669"/>
    <property type="project" value="Ensembl"/>
</dbReference>
<dbReference type="GO" id="GO:0042632">
    <property type="term" value="P:cholesterol homeostasis"/>
    <property type="evidence" value="ECO:0007669"/>
    <property type="project" value="Ensembl"/>
</dbReference>
<dbReference type="GO" id="GO:0042593">
    <property type="term" value="P:glucose homeostasis"/>
    <property type="evidence" value="ECO:0007669"/>
    <property type="project" value="Ensembl"/>
</dbReference>
<dbReference type="GO" id="GO:0007006">
    <property type="term" value="P:mitochondrial membrane organization"/>
    <property type="evidence" value="ECO:0000315"/>
    <property type="project" value="UniProtKB"/>
</dbReference>
<dbReference type="GO" id="GO:0017121">
    <property type="term" value="P:plasma membrane phospholipid scrambling"/>
    <property type="evidence" value="ECO:0000318"/>
    <property type="project" value="GO_Central"/>
</dbReference>
<dbReference type="GO" id="GO:0042981">
    <property type="term" value="P:regulation of apoptotic process"/>
    <property type="evidence" value="ECO:0000315"/>
    <property type="project" value="UniProtKB"/>
</dbReference>
<dbReference type="GO" id="GO:0090199">
    <property type="term" value="P:regulation of release of cytochrome c from mitochondria"/>
    <property type="evidence" value="ECO:0000315"/>
    <property type="project" value="UniProtKB"/>
</dbReference>
<dbReference type="InterPro" id="IPR005552">
    <property type="entry name" value="Scramblase"/>
</dbReference>
<dbReference type="PANTHER" id="PTHR23248:SF37">
    <property type="entry name" value="PHOSPHOLIPID SCRAMBLASE 3"/>
    <property type="match status" value="1"/>
</dbReference>
<dbReference type="PANTHER" id="PTHR23248">
    <property type="entry name" value="PHOSPHOLIPID SCRAMBLASE-RELATED"/>
    <property type="match status" value="1"/>
</dbReference>
<dbReference type="Pfam" id="PF03803">
    <property type="entry name" value="Scramblase"/>
    <property type="match status" value="1"/>
</dbReference>
<reference key="1">
    <citation type="journal article" date="2000" name="Biochim. Biophys. Acta">
        <title>Identification of three new members of the phospholipid scramblase gene family.</title>
        <authorList>
            <person name="Wiedmer T."/>
            <person name="Zhou Q."/>
            <person name="Kwoh D.Y."/>
            <person name="Sims P.J."/>
        </authorList>
    </citation>
    <scope>NUCLEOTIDE SEQUENCE [MRNA]</scope>
    <scope>VARIANT ILE-293</scope>
</reference>
<reference key="2">
    <citation type="journal article" date="2004" name="Nat. Genet.">
        <title>Complete sequencing and characterization of 21,243 full-length human cDNAs.</title>
        <authorList>
            <person name="Ota T."/>
            <person name="Suzuki Y."/>
            <person name="Nishikawa T."/>
            <person name="Otsuki T."/>
            <person name="Sugiyama T."/>
            <person name="Irie R."/>
            <person name="Wakamatsu A."/>
            <person name="Hayashi K."/>
            <person name="Sato H."/>
            <person name="Nagai K."/>
            <person name="Kimura K."/>
            <person name="Makita H."/>
            <person name="Sekine M."/>
            <person name="Obayashi M."/>
            <person name="Nishi T."/>
            <person name="Shibahara T."/>
            <person name="Tanaka T."/>
            <person name="Ishii S."/>
            <person name="Yamamoto J."/>
            <person name="Saito K."/>
            <person name="Kawai Y."/>
            <person name="Isono Y."/>
            <person name="Nakamura Y."/>
            <person name="Nagahari K."/>
            <person name="Murakami K."/>
            <person name="Yasuda T."/>
            <person name="Iwayanagi T."/>
            <person name="Wagatsuma M."/>
            <person name="Shiratori A."/>
            <person name="Sudo H."/>
            <person name="Hosoiri T."/>
            <person name="Kaku Y."/>
            <person name="Kodaira H."/>
            <person name="Kondo H."/>
            <person name="Sugawara M."/>
            <person name="Takahashi M."/>
            <person name="Kanda K."/>
            <person name="Yokoi T."/>
            <person name="Furuya T."/>
            <person name="Kikkawa E."/>
            <person name="Omura Y."/>
            <person name="Abe K."/>
            <person name="Kamihara K."/>
            <person name="Katsuta N."/>
            <person name="Sato K."/>
            <person name="Tanikawa M."/>
            <person name="Yamazaki M."/>
            <person name="Ninomiya K."/>
            <person name="Ishibashi T."/>
            <person name="Yamashita H."/>
            <person name="Murakawa K."/>
            <person name="Fujimori K."/>
            <person name="Tanai H."/>
            <person name="Kimata M."/>
            <person name="Watanabe M."/>
            <person name="Hiraoka S."/>
            <person name="Chiba Y."/>
            <person name="Ishida S."/>
            <person name="Ono Y."/>
            <person name="Takiguchi S."/>
            <person name="Watanabe S."/>
            <person name="Yosida M."/>
            <person name="Hotuta T."/>
            <person name="Kusano J."/>
            <person name="Kanehori K."/>
            <person name="Takahashi-Fujii A."/>
            <person name="Hara H."/>
            <person name="Tanase T.-O."/>
            <person name="Nomura Y."/>
            <person name="Togiya S."/>
            <person name="Komai F."/>
            <person name="Hara R."/>
            <person name="Takeuchi K."/>
            <person name="Arita M."/>
            <person name="Imose N."/>
            <person name="Musashino K."/>
            <person name="Yuuki H."/>
            <person name="Oshima A."/>
            <person name="Sasaki N."/>
            <person name="Aotsuka S."/>
            <person name="Yoshikawa Y."/>
            <person name="Matsunawa H."/>
            <person name="Ichihara T."/>
            <person name="Shiohata N."/>
            <person name="Sano S."/>
            <person name="Moriya S."/>
            <person name="Momiyama H."/>
            <person name="Satoh N."/>
            <person name="Takami S."/>
            <person name="Terashima Y."/>
            <person name="Suzuki O."/>
            <person name="Nakagawa S."/>
            <person name="Senoh A."/>
            <person name="Mizoguchi H."/>
            <person name="Goto Y."/>
            <person name="Shimizu F."/>
            <person name="Wakebe H."/>
            <person name="Hishigaki H."/>
            <person name="Watanabe T."/>
            <person name="Sugiyama A."/>
            <person name="Takemoto M."/>
            <person name="Kawakami B."/>
            <person name="Yamazaki M."/>
            <person name="Watanabe K."/>
            <person name="Kumagai A."/>
            <person name="Itakura S."/>
            <person name="Fukuzumi Y."/>
            <person name="Fujimori Y."/>
            <person name="Komiyama M."/>
            <person name="Tashiro H."/>
            <person name="Tanigami A."/>
            <person name="Fujiwara T."/>
            <person name="Ono T."/>
            <person name="Yamada K."/>
            <person name="Fujii Y."/>
            <person name="Ozaki K."/>
            <person name="Hirao M."/>
            <person name="Ohmori Y."/>
            <person name="Kawabata A."/>
            <person name="Hikiji T."/>
            <person name="Kobatake N."/>
            <person name="Inagaki H."/>
            <person name="Ikema Y."/>
            <person name="Okamoto S."/>
            <person name="Okitani R."/>
            <person name="Kawakami T."/>
            <person name="Noguchi S."/>
            <person name="Itoh T."/>
            <person name="Shigeta K."/>
            <person name="Senba T."/>
            <person name="Matsumura K."/>
            <person name="Nakajima Y."/>
            <person name="Mizuno T."/>
            <person name="Morinaga M."/>
            <person name="Sasaki M."/>
            <person name="Togashi T."/>
            <person name="Oyama M."/>
            <person name="Hata H."/>
            <person name="Watanabe M."/>
            <person name="Komatsu T."/>
            <person name="Mizushima-Sugano J."/>
            <person name="Satoh T."/>
            <person name="Shirai Y."/>
            <person name="Takahashi Y."/>
            <person name="Nakagawa K."/>
            <person name="Okumura K."/>
            <person name="Nagase T."/>
            <person name="Nomura N."/>
            <person name="Kikuchi H."/>
            <person name="Masuho Y."/>
            <person name="Yamashita R."/>
            <person name="Nakai K."/>
            <person name="Yada T."/>
            <person name="Nakamura Y."/>
            <person name="Ohara O."/>
            <person name="Isogai T."/>
            <person name="Sugano S."/>
        </authorList>
    </citation>
    <scope>NUCLEOTIDE SEQUENCE [LARGE SCALE MRNA]</scope>
    <scope>VARIANT ILE-293</scope>
    <source>
        <tissue>Placenta</tissue>
        <tissue>Thalamus</tissue>
    </source>
</reference>
<reference key="3">
    <citation type="journal article" date="2006" name="Nature">
        <title>DNA sequence of human chromosome 17 and analysis of rearrangement in the human lineage.</title>
        <authorList>
            <person name="Zody M.C."/>
            <person name="Garber M."/>
            <person name="Adams D.J."/>
            <person name="Sharpe T."/>
            <person name="Harrow J."/>
            <person name="Lupski J.R."/>
            <person name="Nicholson C."/>
            <person name="Searle S.M."/>
            <person name="Wilming L."/>
            <person name="Young S.K."/>
            <person name="Abouelleil A."/>
            <person name="Allen N.R."/>
            <person name="Bi W."/>
            <person name="Bloom T."/>
            <person name="Borowsky M.L."/>
            <person name="Bugalter B.E."/>
            <person name="Butler J."/>
            <person name="Chang J.L."/>
            <person name="Chen C.-K."/>
            <person name="Cook A."/>
            <person name="Corum B."/>
            <person name="Cuomo C.A."/>
            <person name="de Jong P.J."/>
            <person name="DeCaprio D."/>
            <person name="Dewar K."/>
            <person name="FitzGerald M."/>
            <person name="Gilbert J."/>
            <person name="Gibson R."/>
            <person name="Gnerre S."/>
            <person name="Goldstein S."/>
            <person name="Grafham D.V."/>
            <person name="Grocock R."/>
            <person name="Hafez N."/>
            <person name="Hagopian D.S."/>
            <person name="Hart E."/>
            <person name="Norman C.H."/>
            <person name="Humphray S."/>
            <person name="Jaffe D.B."/>
            <person name="Jones M."/>
            <person name="Kamal M."/>
            <person name="Khodiyar V.K."/>
            <person name="LaButti K."/>
            <person name="Laird G."/>
            <person name="Lehoczky J."/>
            <person name="Liu X."/>
            <person name="Lokyitsang T."/>
            <person name="Loveland J."/>
            <person name="Lui A."/>
            <person name="Macdonald P."/>
            <person name="Major J.E."/>
            <person name="Matthews L."/>
            <person name="Mauceli E."/>
            <person name="McCarroll S.A."/>
            <person name="Mihalev A.H."/>
            <person name="Mudge J."/>
            <person name="Nguyen C."/>
            <person name="Nicol R."/>
            <person name="O'Leary S.B."/>
            <person name="Osoegawa K."/>
            <person name="Schwartz D.C."/>
            <person name="Shaw-Smith C."/>
            <person name="Stankiewicz P."/>
            <person name="Steward C."/>
            <person name="Swarbreck D."/>
            <person name="Venkataraman V."/>
            <person name="Whittaker C.A."/>
            <person name="Yang X."/>
            <person name="Zimmer A.R."/>
            <person name="Bradley A."/>
            <person name="Hubbard T."/>
            <person name="Birren B.W."/>
            <person name="Rogers J."/>
            <person name="Lander E.S."/>
            <person name="Nusbaum C."/>
        </authorList>
    </citation>
    <scope>NUCLEOTIDE SEQUENCE [LARGE SCALE GENOMIC DNA]</scope>
</reference>
<reference key="4">
    <citation type="submission" date="2005-09" db="EMBL/GenBank/DDBJ databases">
        <authorList>
            <person name="Mural R.J."/>
            <person name="Istrail S."/>
            <person name="Sutton G.G."/>
            <person name="Florea L."/>
            <person name="Halpern A.L."/>
            <person name="Mobarry C.M."/>
            <person name="Lippert R."/>
            <person name="Walenz B."/>
            <person name="Shatkay H."/>
            <person name="Dew I."/>
            <person name="Miller J.R."/>
            <person name="Flanigan M.J."/>
            <person name="Edwards N.J."/>
            <person name="Bolanos R."/>
            <person name="Fasulo D."/>
            <person name="Halldorsson B.V."/>
            <person name="Hannenhalli S."/>
            <person name="Turner R."/>
            <person name="Yooseph S."/>
            <person name="Lu F."/>
            <person name="Nusskern D.R."/>
            <person name="Shue B.C."/>
            <person name="Zheng X.H."/>
            <person name="Zhong F."/>
            <person name="Delcher A.L."/>
            <person name="Huson D.H."/>
            <person name="Kravitz S.A."/>
            <person name="Mouchard L."/>
            <person name="Reinert K."/>
            <person name="Remington K.A."/>
            <person name="Clark A.G."/>
            <person name="Waterman M.S."/>
            <person name="Eichler E.E."/>
            <person name="Adams M.D."/>
            <person name="Hunkapiller M.W."/>
            <person name="Myers E.W."/>
            <person name="Venter J.C."/>
        </authorList>
    </citation>
    <scope>NUCLEOTIDE SEQUENCE [LARGE SCALE GENOMIC DNA]</scope>
    <scope>VARIANT ILE-293</scope>
</reference>
<reference key="5">
    <citation type="journal article" date="2004" name="Genome Res.">
        <title>The status, quality, and expansion of the NIH full-length cDNA project: the Mammalian Gene Collection (MGC).</title>
        <authorList>
            <consortium name="The MGC Project Team"/>
        </authorList>
    </citation>
    <scope>NUCLEOTIDE SEQUENCE [LARGE SCALE MRNA]</scope>
    <scope>VARIANT ILE-293</scope>
    <source>
        <tissue>B-cell</tissue>
        <tissue>Placenta</tissue>
    </source>
</reference>
<reference key="6">
    <citation type="journal article" date="2003" name="Cancer Res.">
        <title>Phospholipid scramblase 3 is the mitochondrial target of protein kinase C delta-induced apoptosis.</title>
        <authorList>
            <person name="Liu J."/>
            <person name="Chen J."/>
            <person name="Dai Q."/>
            <person name="Lee R.M."/>
        </authorList>
    </citation>
    <scope>FUNCTION</scope>
    <scope>PHOSPHORYLATION</scope>
    <scope>MUTAGENESIS OF PHE-258</scope>
    <scope>INTERACTION WITH PRKCD</scope>
</reference>
<reference key="7">
    <citation type="journal article" date="2003" name="Mol. Cancer Res.">
        <title>Phospholipid scramblase 3 controls mitochondrial structure, function, and apoptotic response.</title>
        <authorList>
            <person name="Liu J."/>
            <person name="Dai Q."/>
            <person name="Chen J."/>
            <person name="Durrant D."/>
            <person name="Freeman A."/>
            <person name="Liu T."/>
            <person name="Grossman D."/>
            <person name="Lee R.M."/>
        </authorList>
    </citation>
    <scope>FUNCTION</scope>
    <scope>CATALYTIC ACTIVITY</scope>
    <scope>SUBCELLULAR LOCATION</scope>
    <scope>MUTAGENESIS OF PHE-258</scope>
</reference>
<reference key="8">
    <citation type="journal article" date="2007" name="Biochem. J.">
        <title>Phospholipid scramblase-3 regulates cardiolipin de novo biosynthesis and its resynthesis in growing HeLa cells.</title>
        <authorList>
            <person name="Van Q."/>
            <person name="Liu J."/>
            <person name="Lu B."/>
            <person name="Feingold K.R."/>
            <person name="Shi Y."/>
            <person name="Lee R.M."/>
            <person name="Hatch G.M."/>
        </authorList>
    </citation>
    <scope>FUNCTION</scope>
    <scope>MUTAGENESIS OF PHE-258</scope>
</reference>
<reference key="9">
    <citation type="journal article" date="2007" name="J. Cell. Biochem.">
        <title>Phosphorylation of mitochondrial phospholipid scramblase 3 by protein kinase C-delta induces its activation and facilitates mitochondrial targeting of tBid.</title>
        <authorList>
            <person name="He Y."/>
            <person name="Liu J."/>
            <person name="Grossman D."/>
            <person name="Durrant D."/>
            <person name="Sweatman T."/>
            <person name="Lothstein L."/>
            <person name="Epand R.F."/>
            <person name="Epand R.M."/>
            <person name="Lee R.M."/>
        </authorList>
    </citation>
    <scope>FUNCTION</scope>
    <scope>CATALYTIC ACTIVITY</scope>
    <scope>COFACTOR</scope>
    <scope>PHOSPHORYLATION AT THR-21</scope>
    <scope>MUTAGENESIS OF THR-21</scope>
    <scope>SUBCELLULAR LOCATION</scope>
</reference>
<reference key="10">
    <citation type="journal article" date="2008" name="Apoptosis">
        <title>Tumor necrosis factor (TNF)-related apoptosis-inducing ligand (TRAIL) induced mitochondrial pathway to apoptosis and caspase activation is potentiated by phospholipid scramblase-3.</title>
        <authorList>
            <person name="Ndebele K."/>
            <person name="Gona P."/>
            <person name="Jin T.G."/>
            <person name="Benhaga N."/>
            <person name="Chalah A."/>
            <person name="Degli-Esposti M."/>
            <person name="Khosravi-Far R."/>
        </authorList>
    </citation>
    <scope>FUNCTION</scope>
    <scope>SUBCELLULAR LOCATION</scope>
    <scope>MUTAGENESIS OF PHE-258</scope>
</reference>
<reference key="11">
    <citation type="journal article" date="2008" name="Biochemistry">
        <title>Role of phospholipid scramblase 3 in the regulation of tumor necrosis factor-alpha-induced apoptosis.</title>
        <authorList>
            <person name="Liu J."/>
            <person name="Epand R.F."/>
            <person name="Durrant D."/>
            <person name="Grossman D."/>
            <person name="Chi N.W."/>
            <person name="Epand R.M."/>
            <person name="Lee R.M."/>
        </authorList>
    </citation>
    <scope>FUNCTION</scope>
    <scope>CATALYTIC ACTIVITY</scope>
    <scope>COFACTOR</scope>
    <scope>MUTAGENESIS OF PHE-258</scope>
</reference>
<reference key="12">
    <citation type="journal article" date="2008" name="J. Biol. Chem.">
        <title>Identification of Alix-type and non-Alix-type ALG-2-binding sites in human phospholipid scramblase 3: differential binding to an alternatively spliced isoform and amino acid-substituted mutants.</title>
        <authorList>
            <person name="Shibata H."/>
            <person name="Suzuki H."/>
            <person name="Kakiuchi T."/>
            <person name="Inuzuka T."/>
            <person name="Yoshida H."/>
            <person name="Mizuno T."/>
            <person name="Maki M."/>
        </authorList>
    </citation>
    <scope>INTERACTION WITH PDCD6</scope>
    <scope>MUTAGENESIS OF PHE-49 AND PHE-52</scope>
</reference>
<reference key="13">
    <citation type="journal article" date="2011" name="BMC Syst. Biol.">
        <title>Initial characterization of the human central proteome.</title>
        <authorList>
            <person name="Burkard T.R."/>
            <person name="Planyavsky M."/>
            <person name="Kaupe I."/>
            <person name="Breitwieser F.P."/>
            <person name="Buerckstuemmer T."/>
            <person name="Bennett K.L."/>
            <person name="Superti-Furga G."/>
            <person name="Colinge J."/>
        </authorList>
    </citation>
    <scope>IDENTIFICATION BY MASS SPECTROMETRY [LARGE SCALE ANALYSIS]</scope>
</reference>
<reference key="14">
    <citation type="journal article" date="2018" name="Biol. Chem.">
        <title>In vitro reconstitution and biochemical characterization of human phospholipid scramblase 3: phospholipid specificity and metal ion binding studies.</title>
        <authorList>
            <person name="Palanirajan S.K."/>
            <person name="Sivagnanam U."/>
            <person name="Murugan S."/>
            <person name="Gummadi S.N."/>
        </authorList>
    </citation>
    <scope>FUNCTION</scope>
    <scope>CATALYTIC ACTIVITY</scope>
    <scope>SUBUNIT</scope>
    <scope>COFACTOR</scope>
    <scope>MUTAGENESIS OF PHE-258</scope>
</reference>
<reference key="15">
    <citation type="journal article" date="2020" name="Chem. Res. Toxicol.">
        <title>Heavy-Metals-Mediated Phospholipids Scrambling by Human Phospholipid Scramblase 3: A Probable Role in Mitochondrial Apoptosis.</title>
        <authorList>
            <person name="Palanirajan S.K."/>
            <person name="Gummadi S.N."/>
        </authorList>
    </citation>
    <scope>FUNCTION</scope>
    <scope>CATALYTIC ACTIVITY</scope>
    <scope>SUBUNIT</scope>
    <scope>COFACTOR</scope>
    <scope>MUTAGENESIS OF PHE-258</scope>
    <scope>ACTIVITY REGULATION</scope>
</reference>
<gene>
    <name type="primary">PLSCR3</name>
</gene>
<protein>
    <recommendedName>
        <fullName>Phospholipid scramblase 3</fullName>
        <shortName>PL scramblase 3</shortName>
    </recommendedName>
    <alternativeName>
        <fullName>Ca(2+)-dependent phospholipid scramblase 3</fullName>
    </alternativeName>
</protein>
<sequence length="295" mass="31648">MAGYLPPKGYAPSPPPPYPVTPGYPEPALHPGPGQAPVPAQVPAPAPGFALFPSPGPVALGSAAPFLPLPGVPSGLEFLVQIDQILIHQKAERVETFLGWETCNRYELRSGAGQPLGQAAEESNCCARLCCGARRPLRVRLADPGDREVLRLLRPLHCGCSCCPCGLQEMEVQAPPGTTIGHVLQTWHPFLPKFSIQDADRQTVLRVVGPCWTCGCGTDTNFEVKTRDESRSVGRISKQWGGLVREALTDADDFGLQFPLDLDVRVKAVLLGATFLIDYMFFEKRGGAGPSAVTS</sequence>
<name>PLS3_HUMAN</name>
<proteinExistence type="evidence at protein level"/>
<evidence type="ECO:0000250" key="1">
    <source>
        <dbReference type="UniProtKB" id="O15162"/>
    </source>
</evidence>
<evidence type="ECO:0000250" key="2">
    <source>
        <dbReference type="UniProtKB" id="Q6QBQ4"/>
    </source>
</evidence>
<evidence type="ECO:0000250" key="3">
    <source>
        <dbReference type="UniProtKB" id="Q9JIZ9"/>
    </source>
</evidence>
<evidence type="ECO:0000255" key="4"/>
<evidence type="ECO:0000256" key="5">
    <source>
        <dbReference type="SAM" id="MobiDB-lite"/>
    </source>
</evidence>
<evidence type="ECO:0000269" key="6">
    <source>
    </source>
</evidence>
<evidence type="ECO:0000269" key="7">
    <source>
    </source>
</evidence>
<evidence type="ECO:0000269" key="8">
    <source>
    </source>
</evidence>
<evidence type="ECO:0000269" key="9">
    <source>
    </source>
</evidence>
<evidence type="ECO:0000269" key="10">
    <source>
    </source>
</evidence>
<evidence type="ECO:0000269" key="11">
    <source>
    </source>
</evidence>
<evidence type="ECO:0000269" key="12">
    <source>
    </source>
</evidence>
<evidence type="ECO:0000269" key="13">
    <source>
    </source>
</evidence>
<evidence type="ECO:0000269" key="14">
    <source>
    </source>
</evidence>
<evidence type="ECO:0000269" key="15">
    <source>
    </source>
</evidence>
<evidence type="ECO:0000269" key="16">
    <source>
    </source>
</evidence>
<evidence type="ECO:0000269" key="17">
    <source>
    </source>
</evidence>
<evidence type="ECO:0000269" key="18">
    <source ref="4"/>
</evidence>
<evidence type="ECO:0000305" key="19"/>
<evidence type="ECO:0000305" key="20">
    <source>
    </source>
</evidence>
<evidence type="ECO:0000305" key="21">
    <source>
    </source>
</evidence>
<evidence type="ECO:0000305" key="22">
    <source>
    </source>
</evidence>
<evidence type="ECO:0000305" key="23">
    <source>
    </source>
</evidence>
<evidence type="ECO:0000305" key="24">
    <source>
    </source>
</evidence>
<evidence type="ECO:0000305" key="25">
    <source>
    </source>
</evidence>
<keyword id="KW-0053">Apoptosis</keyword>
<keyword id="KW-0106">Calcium</keyword>
<keyword id="KW-0445">Lipid transport</keyword>
<keyword id="KW-0449">Lipoprotein</keyword>
<keyword id="KW-0472">Membrane</keyword>
<keyword id="KW-0496">Mitochondrion</keyword>
<keyword id="KW-0999">Mitochondrion inner membrane</keyword>
<keyword id="KW-0539">Nucleus</keyword>
<keyword id="KW-0564">Palmitate</keyword>
<keyword id="KW-0597">Phosphoprotein</keyword>
<keyword id="KW-1267">Proteomics identification</keyword>
<keyword id="KW-1185">Reference proteome</keyword>
<keyword id="KW-0677">Repeat</keyword>
<keyword id="KW-0729">SH3-binding</keyword>
<keyword id="KW-0812">Transmembrane</keyword>
<keyword id="KW-1133">Transmembrane helix</keyword>
<keyword id="KW-0813">Transport</keyword>
<organism>
    <name type="scientific">Homo sapiens</name>
    <name type="common">Human</name>
    <dbReference type="NCBI Taxonomy" id="9606"/>
    <lineage>
        <taxon>Eukaryota</taxon>
        <taxon>Metazoa</taxon>
        <taxon>Chordata</taxon>
        <taxon>Craniata</taxon>
        <taxon>Vertebrata</taxon>
        <taxon>Euteleostomi</taxon>
        <taxon>Mammalia</taxon>
        <taxon>Eutheria</taxon>
        <taxon>Euarchontoglires</taxon>
        <taxon>Primates</taxon>
        <taxon>Haplorrhini</taxon>
        <taxon>Catarrhini</taxon>
        <taxon>Hominidae</taxon>
        <taxon>Homo</taxon>
    </lineage>
</organism>
<accession>Q9NRY6</accession>
<accession>A8K252</accession>
<accession>Q567U0</accession>
<accession>Q8NBW6</accession>
<accession>Q96F13</accession>
<comment type="function">
    <text evidence="7 8 11 12 14 15 16 17">Catalyzes calcium-induced ATP-independent rapid bidirectional and non-specific movement of the phospholipids (lipid scrambling or lipid flip-flop) between the inner and outer membrane of the mitochondria (PubMed:14573790, PubMed:17226776, PubMed:18358005, PubMed:29337693, PubMed:31769662). Plays an important role in mitochondrial respiratory function, morphology, and apoptotic response (PubMed:12649167, PubMed:14573790, PubMed:17226776, PubMed:18358005). Mediates the translocation of cardiolipin from the mitochondrial inner membrane to outer membrane enhancing t-Bid induced cytochrome c release and apoptosis (PubMed:14573790, PubMed:17226776, PubMed:18358005). Enhances TNFSF10-induced apoptosis by regulating the distribution of cardiolipin in the mitochondrial membrane resulting in increased release of apoptogenic factors and consequent amplification of the activity of caspases (PubMed:18491232). Regulates cardiolipin de novo biosynthesis and its resynthesis (PubMed:16939411).</text>
</comment>
<comment type="catalytic activity">
    <reaction evidence="8 22 23">
        <text>a cardiolipin(in) = a cardiolipin(out)</text>
        <dbReference type="Rhea" id="RHEA:38695"/>
        <dbReference type="ChEBI" id="CHEBI:62237"/>
    </reaction>
    <physiologicalReaction direction="left-to-right" evidence="21">
        <dbReference type="Rhea" id="RHEA:38696"/>
    </physiologicalReaction>
</comment>
<comment type="catalytic activity">
    <reaction evidence="16 17">
        <text>a 1,2-diacyl-sn-glycero-3-phosphoethanolamine(in) = a 1,2-diacyl-sn-glycero-3-phosphoethanolamine(out)</text>
        <dbReference type="Rhea" id="RHEA:38895"/>
        <dbReference type="ChEBI" id="CHEBI:64612"/>
    </reaction>
    <physiologicalReaction direction="left-to-right" evidence="25">
        <dbReference type="Rhea" id="RHEA:38896"/>
    </physiologicalReaction>
    <physiologicalReaction direction="right-to-left" evidence="25">
        <dbReference type="Rhea" id="RHEA:38897"/>
    </physiologicalReaction>
</comment>
<comment type="catalytic activity">
    <reaction evidence="16">
        <text>a 1,2-diacyl-sn-glycero-3-phosphocholine(in) = a 1,2-diacyl-sn-glycero-3-phosphocholine(out)</text>
        <dbReference type="Rhea" id="RHEA:38571"/>
        <dbReference type="ChEBI" id="CHEBI:57643"/>
    </reaction>
    <physiologicalReaction direction="left-to-right" evidence="24">
        <dbReference type="Rhea" id="RHEA:38572"/>
    </physiologicalReaction>
</comment>
<comment type="catalytic activity">
    <reaction evidence="16">
        <text>a 1,2-diacyl-sn-glycero-3-phospho-L-serine(in) = a 1,2-diacyl-sn-glycero-3-phospho-L-serine(out)</text>
        <dbReference type="Rhea" id="RHEA:38663"/>
        <dbReference type="ChEBI" id="CHEBI:57262"/>
    </reaction>
    <physiologicalReaction direction="left-to-right" evidence="24">
        <dbReference type="Rhea" id="RHEA:38664"/>
    </physiologicalReaction>
</comment>
<comment type="catalytic activity">
    <reaction evidence="16">
        <text>a 1,2-diacyl-sn-glycero-3-phospho-(1'-sn-glycerol)(in) = a 1,2-diacyl-sn-glycero-3-phospho-(1'-sn-glycerol)(out)</text>
        <dbReference type="Rhea" id="RHEA:39743"/>
        <dbReference type="ChEBI" id="CHEBI:64716"/>
    </reaction>
    <physiologicalReaction direction="left-to-right" evidence="24">
        <dbReference type="Rhea" id="RHEA:39744"/>
    </physiologicalReaction>
</comment>
<comment type="cofactor">
    <cofactor evidence="12 14 16 17">
        <name>Ca(2+)</name>
        <dbReference type="ChEBI" id="CHEBI:29108"/>
    </cofactor>
    <cofactor evidence="16">
        <name>Mg(2+)</name>
        <dbReference type="ChEBI" id="CHEBI:18420"/>
    </cofactor>
</comment>
<comment type="activity regulation">
    <text evidence="17">Activated by Pb(2+) and Hg(2+) ions.</text>
</comment>
<comment type="subunit">
    <text evidence="7 13 16 17">Monomer (PubMed:29337693). Forms homooligomers upon binding to Ca(2+), Pb(2+) and Hg(2+) ions (PubMed:29337693, PubMed:31769662). Interacts with PDCD6 in a calcium-dependent manner (PubMed:18256029). Interacts with PRKCD; interaction is enhanced by UV irradiation (PubMed:12649167).</text>
</comment>
<comment type="interaction">
    <interactant intactId="EBI-750734">
        <id>Q9NRY6</id>
    </interactant>
    <interactant intactId="EBI-11976299">
        <id>Q5BKX5-3</id>
        <label>ACTMAP</label>
    </interactant>
    <organismsDiffer>false</organismsDiffer>
    <experiments>3</experiments>
</comment>
<comment type="interaction">
    <interactant intactId="EBI-750734">
        <id>Q9NRY6</id>
    </interactant>
    <interactant intactId="EBI-6557414">
        <id>Q9NZN9</id>
        <label>AIPL1</label>
    </interactant>
    <organismsDiffer>false</organismsDiffer>
    <experiments>3</experiments>
</comment>
<comment type="interaction">
    <interactant intactId="EBI-750734">
        <id>Q9NRY6</id>
    </interactant>
    <interactant intactId="EBI-12809220">
        <id>Q5SWW7</id>
        <label>C10orf55</label>
    </interactant>
    <organismsDiffer>false</organismsDiffer>
    <experiments>3</experiments>
</comment>
<comment type="interaction">
    <interactant intactId="EBI-750734">
        <id>Q9NRY6</id>
    </interactant>
    <interactant intactId="EBI-7317823">
        <id>Q6P5X5</id>
        <label>C22orf39</label>
    </interactant>
    <organismsDiffer>false</organismsDiffer>
    <experiments>3</experiments>
</comment>
<comment type="interaction">
    <interactant intactId="EBI-750734">
        <id>Q9NRY6</id>
    </interactant>
    <interactant intactId="EBI-744545">
        <id>Q8NEC5</id>
        <label>CATSPER1</label>
    </interactant>
    <organismsDiffer>false</organismsDiffer>
    <experiments>8</experiments>
</comment>
<comment type="interaction">
    <interactant intactId="EBI-750734">
        <id>Q9NRY6</id>
    </interactant>
    <interactant intactId="EBI-747133">
        <id>P27658</id>
        <label>COL8A1</label>
    </interactant>
    <organismsDiffer>false</organismsDiffer>
    <experiments>3</experiments>
</comment>
<comment type="interaction">
    <interactant intactId="EBI-750734">
        <id>Q9NRY6</id>
    </interactant>
    <interactant intactId="EBI-740785">
        <id>P49639</id>
        <label>HOXA1</label>
    </interactant>
    <organismsDiffer>false</organismsDiffer>
    <experiments>5</experiments>
</comment>
<comment type="interaction">
    <interactant intactId="EBI-750734">
        <id>Q9NRY6</id>
    </interactant>
    <interactant intactId="EBI-6509505">
        <id>Q0VD86</id>
        <label>INCA1</label>
    </interactant>
    <organismsDiffer>false</organismsDiffer>
    <experiments>3</experiments>
</comment>
<comment type="interaction">
    <interactant intactId="EBI-750734">
        <id>Q9NRY6</id>
    </interactant>
    <interactant intactId="EBI-1052037">
        <id>Q8IUC1</id>
        <label>KRTAP11-1</label>
    </interactant>
    <organismsDiffer>false</organismsDiffer>
    <experiments>3</experiments>
</comment>
<comment type="interaction">
    <interactant intactId="EBI-750734">
        <id>Q9NRY6</id>
    </interactant>
    <interactant intactId="EBI-11992140">
        <id>Q3LI76</id>
        <label>KRTAP15-1</label>
    </interactant>
    <organismsDiffer>false</organismsDiffer>
    <experiments>3</experiments>
</comment>
<comment type="interaction">
    <interactant intactId="EBI-750734">
        <id>Q9NRY6</id>
    </interactant>
    <interactant intactId="EBI-12805508">
        <id>Q3LI70</id>
        <label>KRTAP19-6</label>
    </interactant>
    <organismsDiffer>false</organismsDiffer>
    <experiments>3</experiments>
</comment>
<comment type="interaction">
    <interactant intactId="EBI-750734">
        <id>Q9NRY6</id>
    </interactant>
    <interactant intactId="EBI-10241353">
        <id>Q3SYF9</id>
        <label>KRTAP19-7</label>
    </interactant>
    <organismsDiffer>false</organismsDiffer>
    <experiments>3</experiments>
</comment>
<comment type="interaction">
    <interactant intactId="EBI-750734">
        <id>Q9NRY6</id>
    </interactant>
    <interactant intactId="EBI-751260">
        <id>Q9BYR7</id>
        <label>KRTAP3-2</label>
    </interactant>
    <organismsDiffer>false</organismsDiffer>
    <experiments>3</experiments>
</comment>
<comment type="interaction">
    <interactant intactId="EBI-750734">
        <id>Q9NRY6</id>
    </interactant>
    <interactant intactId="EBI-3957694">
        <id>Q9BYR6</id>
        <label>KRTAP3-3</label>
    </interactant>
    <organismsDiffer>false</organismsDiffer>
    <experiments>3</experiments>
</comment>
<comment type="interaction">
    <interactant intactId="EBI-750734">
        <id>Q9NRY6</id>
    </interactant>
    <interactant intactId="EBI-12111050">
        <id>Q3LI64</id>
        <label>KRTAP6-1</label>
    </interactant>
    <organismsDiffer>false</organismsDiffer>
    <experiments>3</experiments>
</comment>
<comment type="interaction">
    <interactant intactId="EBI-750734">
        <id>Q9NRY6</id>
    </interactant>
    <interactant intactId="EBI-12224199">
        <id>Q5T751</id>
        <label>LCE1C</label>
    </interactant>
    <organismsDiffer>false</organismsDiffer>
    <experiments>3</experiments>
</comment>
<comment type="interaction">
    <interactant intactId="EBI-750734">
        <id>Q9NRY6</id>
    </interactant>
    <interactant intactId="EBI-11478468">
        <id>O14633</id>
        <label>LCE2B</label>
    </interactant>
    <organismsDiffer>false</organismsDiffer>
    <experiments>3</experiments>
</comment>
<comment type="interaction">
    <interactant intactId="EBI-750734">
        <id>Q9NRY6</id>
    </interactant>
    <interactant intactId="EBI-10246358">
        <id>Q5TA78</id>
        <label>LCE4A</label>
    </interactant>
    <organismsDiffer>false</organismsDiffer>
    <experiments>6</experiments>
</comment>
<comment type="interaction">
    <interactant intactId="EBI-750734">
        <id>Q9NRY6</id>
    </interactant>
    <interactant intactId="EBI-11955689">
        <id>Q5TCM9</id>
        <label>LCE5A</label>
    </interactant>
    <organismsDiffer>false</organismsDiffer>
    <experiments>6</experiments>
</comment>
<comment type="interaction">
    <interactant intactId="EBI-750734">
        <id>Q9NRY6</id>
    </interactant>
    <interactant intactId="EBI-947402">
        <id>O60336</id>
        <label>MAPKBP1</label>
    </interactant>
    <organismsDiffer>false</organismsDiffer>
    <experiments>3</experiments>
</comment>
<comment type="interaction">
    <interactant intactId="EBI-750734">
        <id>Q9NRY6</id>
    </interactant>
    <interactant intactId="EBI-747693">
        <id>P41227</id>
        <label>NAA10</label>
    </interactant>
    <organismsDiffer>false</organismsDiffer>
    <experiments>3</experiments>
</comment>
<comment type="interaction">
    <interactant intactId="EBI-750734">
        <id>Q9NRY6</id>
    </interactant>
    <interactant intactId="EBI-12128194">
        <id>Q96DL1-3</id>
        <label>NXPE2</label>
    </interactant>
    <organismsDiffer>false</organismsDiffer>
    <experiments>3</experiments>
</comment>
<comment type="interaction">
    <interactant intactId="EBI-750734">
        <id>Q9NRY6</id>
    </interactant>
    <interactant intactId="EBI-352915">
        <id>O75340</id>
        <label>PDCD6</label>
    </interactant>
    <organismsDiffer>false</organismsDiffer>
    <experiments>9</experiments>
</comment>
<comment type="interaction">
    <interactant intactId="EBI-750734">
        <id>Q9NRY6</id>
    </interactant>
    <interactant intactId="EBI-748265">
        <id>P78337</id>
        <label>PITX1</label>
    </interactant>
    <organismsDiffer>false</organismsDiffer>
    <experiments>3</experiments>
</comment>
<comment type="interaction">
    <interactant intactId="EBI-750734">
        <id>Q9NRY6</id>
    </interactant>
    <interactant intactId="EBI-11984663">
        <id>Q06455-2</id>
        <label>RUNX1T1</label>
    </interactant>
    <organismsDiffer>false</organismsDiffer>
    <experiments>3</experiments>
</comment>
<comment type="interaction">
    <interactant intactId="EBI-750734">
        <id>Q9NRY6</id>
    </interactant>
    <interactant intactId="EBI-12006206">
        <id>Q5SY68</id>
        <label>S100A7L2</label>
    </interactant>
    <organismsDiffer>false</organismsDiffer>
    <experiments>3</experiments>
</comment>
<comment type="interaction">
    <interactant intactId="EBI-750734">
        <id>Q9NRY6</id>
    </interactant>
    <interactant intactId="EBI-750494">
        <id>P49901</id>
        <label>SMCP</label>
    </interactant>
    <organismsDiffer>false</organismsDiffer>
    <experiments>3</experiments>
</comment>
<comment type="interaction">
    <interactant intactId="EBI-750734">
        <id>Q9NRY6</id>
    </interactant>
    <interactant intactId="EBI-749295">
        <id>O75716</id>
        <label>STK16</label>
    </interactant>
    <organismsDiffer>false</organismsDiffer>
    <experiments>6</experiments>
</comment>
<comment type="interaction">
    <interactant intactId="EBI-750734">
        <id>Q9NRY6</id>
    </interactant>
    <interactant intactId="EBI-2509913">
        <id>Q96KP6</id>
        <label>TNIP3</label>
    </interactant>
    <organismsDiffer>false</organismsDiffer>
    <experiments>3</experiments>
</comment>
<comment type="interaction">
    <interactant intactId="EBI-750734">
        <id>Q9NRY6</id>
    </interactant>
    <interactant intactId="EBI-949753">
        <id>Q63HR2</id>
        <label>TNS2</label>
    </interactant>
    <organismsDiffer>false</organismsDiffer>
    <experiments>3</experiments>
</comment>
<comment type="interaction">
    <interactant intactId="EBI-750734">
        <id>Q9NRY6</id>
    </interactant>
    <interactant intactId="EBI-358993">
        <id>Q15645</id>
        <label>TRIP13</label>
    </interactant>
    <organismsDiffer>false</organismsDiffer>
    <experiments>7</experiments>
</comment>
<comment type="interaction">
    <interactant intactId="EBI-750734">
        <id>Q9NRY6</id>
    </interactant>
    <interactant intactId="EBI-12040603">
        <id>Q9NZC7-5</id>
        <label>WWOX</label>
    </interactant>
    <organismsDiffer>false</organismsDiffer>
    <experiments>3</experiments>
</comment>
<comment type="interaction">
    <interactant intactId="EBI-750734">
        <id>Q9NRY6</id>
    </interactant>
    <interactant intactId="EBI-11963196">
        <id>Q15915</id>
        <label>ZIC1</label>
    </interactant>
    <organismsDiffer>false</organismsDiffer>
    <experiments>3</experiments>
</comment>
<comment type="subcellular location">
    <subcellularLocation>
        <location evidence="8 12 15">Mitochondrion membrane</location>
        <topology evidence="2">Single-pass type II membrane protein</topology>
    </subcellularLocation>
    <subcellularLocation>
        <location evidence="2">Mitochondrion inner membrane</location>
        <topology evidence="2">Single-pass type II membrane protein</topology>
    </subcellularLocation>
    <subcellularLocation>
        <location evidence="3">Nucleus</location>
    </subcellularLocation>
    <text evidence="3">Palmitoylation regulates its localization to the cell membrane or the nucleus; trafficking to the cell membrane is dependent upon palmitoylation whereas in the absence of palmitoylation, localizes to the nucleus.</text>
</comment>
<comment type="tissue specificity">
    <text>Expressed in heart, placenta, lung, liver, skeletal muscle, kidney, pancreas, spleen, thymus, prostate, uterus, small intestine and peripheral blood lymphocytes. Not detected in testis, brain and liver.</text>
</comment>
<comment type="domain">
    <text evidence="1">The N-terminal proline-rich domain (PRD) is required for phospholipid scramblase activity.</text>
</comment>
<comment type="PTM">
    <text evidence="12 20">Phosphorylation at Thr-21 by PKC/PRKCD upon apoptotic stimuli enhances phospholipid scramblase activity.</text>
</comment>
<comment type="PTM">
    <text evidence="3">Palmitoylation regulates its localization to the cell membrane or the nucleus; trafficking to the cell membrane is dependent upon palmitoylation whereas in the absence of palmitoylation, localizes to the nucleus.</text>
</comment>
<comment type="similarity">
    <text evidence="19">Belongs to the phospholipid scramblase family.</text>
</comment>